<evidence type="ECO:0000255" key="1">
    <source>
        <dbReference type="HAMAP-Rule" id="MF_01357"/>
    </source>
</evidence>
<comment type="function">
    <text evidence="1">NDH-1 shuttles electrons from NADH, via FMN and iron-sulfur (Fe-S) centers, to quinones in the respiratory chain. The immediate electron acceptor for the enzyme in this species is believed to be ubiquinone. Couples the redox reaction to proton translocation (for every two electrons transferred, four hydrogen ions are translocated across the cytoplasmic membrane), and thus conserves the redox energy in a proton gradient.</text>
</comment>
<comment type="catalytic activity">
    <reaction evidence="1">
        <text>a quinone + NADH + 5 H(+)(in) = a quinol + NAD(+) + 4 H(+)(out)</text>
        <dbReference type="Rhea" id="RHEA:57888"/>
        <dbReference type="ChEBI" id="CHEBI:15378"/>
        <dbReference type="ChEBI" id="CHEBI:24646"/>
        <dbReference type="ChEBI" id="CHEBI:57540"/>
        <dbReference type="ChEBI" id="CHEBI:57945"/>
        <dbReference type="ChEBI" id="CHEBI:132124"/>
    </reaction>
</comment>
<comment type="subunit">
    <text evidence="1">NDH-1 is composed of 14 different subunits. Subunits NuoB, C, D, E, F, and G constitute the peripheral sector of the complex.</text>
</comment>
<comment type="subcellular location">
    <subcellularLocation>
        <location evidence="1">Cell inner membrane</location>
        <topology evidence="1">Peripheral membrane protein</topology>
        <orientation evidence="1">Cytoplasmic side</orientation>
    </subcellularLocation>
</comment>
<comment type="similarity">
    <text evidence="1">Belongs to the complex I 30 kDa subunit family.</text>
</comment>
<organism>
    <name type="scientific">Methylobacillus flagellatus (strain ATCC 51484 / DSM 6875 / VKM B-1610 / KT)</name>
    <dbReference type="NCBI Taxonomy" id="265072"/>
    <lineage>
        <taxon>Bacteria</taxon>
        <taxon>Pseudomonadati</taxon>
        <taxon>Pseudomonadota</taxon>
        <taxon>Betaproteobacteria</taxon>
        <taxon>Nitrosomonadales</taxon>
        <taxon>Methylophilaceae</taxon>
        <taxon>Methylobacillus</taxon>
    </lineage>
</organism>
<name>NUOC_METFK</name>
<accession>Q1GZL1</accession>
<gene>
    <name evidence="1" type="primary">nuoC</name>
    <name type="ordered locus">Mfla_2059</name>
</gene>
<protein>
    <recommendedName>
        <fullName evidence="1">NADH-quinone oxidoreductase subunit C</fullName>
        <ecNumber evidence="1">7.1.1.-</ecNumber>
    </recommendedName>
    <alternativeName>
        <fullName evidence="1">NADH dehydrogenase I subunit C</fullName>
    </alternativeName>
    <alternativeName>
        <fullName evidence="1">NDH-1 subunit C</fullName>
    </alternativeName>
</protein>
<feature type="chain" id="PRO_0000358124" description="NADH-quinone oxidoreductase subunit C">
    <location>
        <begin position="1"/>
        <end position="197"/>
    </location>
</feature>
<sequence length="197" mass="23155">MTRLEQLKQHLQDVFGNSITRLQECRNEVTIECQAPCLLEVANLLRDHKLLKFEQLIDLCGVDYADYGEGSWSGLRYATVYHFLSVSLNQRLRLRVFAPDDDFPVLPTVVDIWPVANWFERESFDLFGIMYEGHPDLRRLLTDYGFVGHPFRKDFPMIGNVEMRYDPERQRVVYQPVTIDPRNNVPRVIREEGFHHG</sequence>
<keyword id="KW-0997">Cell inner membrane</keyword>
<keyword id="KW-1003">Cell membrane</keyword>
<keyword id="KW-0472">Membrane</keyword>
<keyword id="KW-0520">NAD</keyword>
<keyword id="KW-0874">Quinone</keyword>
<keyword id="KW-1185">Reference proteome</keyword>
<keyword id="KW-1278">Translocase</keyword>
<keyword id="KW-0813">Transport</keyword>
<keyword id="KW-0830">Ubiquinone</keyword>
<reference key="1">
    <citation type="submission" date="2006-03" db="EMBL/GenBank/DDBJ databases">
        <title>Complete sequence of Methylobacillus flagellatus KT.</title>
        <authorList>
            <consortium name="US DOE Joint Genome Institute"/>
            <person name="Copeland A."/>
            <person name="Lucas S."/>
            <person name="Lapidus A."/>
            <person name="Barry K."/>
            <person name="Detter J.C."/>
            <person name="Glavina del Rio T."/>
            <person name="Hammon N."/>
            <person name="Israni S."/>
            <person name="Dalin E."/>
            <person name="Tice H."/>
            <person name="Pitluck S."/>
            <person name="Brettin T."/>
            <person name="Bruce D."/>
            <person name="Han C."/>
            <person name="Tapia R."/>
            <person name="Saunders E."/>
            <person name="Gilna P."/>
            <person name="Schmutz J."/>
            <person name="Larimer F."/>
            <person name="Land M."/>
            <person name="Kyrpides N."/>
            <person name="Anderson I."/>
            <person name="Richardson P."/>
        </authorList>
    </citation>
    <scope>NUCLEOTIDE SEQUENCE [LARGE SCALE GENOMIC DNA]</scope>
    <source>
        <strain>ATCC 51484 / DSM 6875 / VKM B-1610 / KT</strain>
    </source>
</reference>
<proteinExistence type="inferred from homology"/>
<dbReference type="EC" id="7.1.1.-" evidence="1"/>
<dbReference type="EMBL" id="CP000284">
    <property type="protein sequence ID" value="ABE50326.1"/>
    <property type="molecule type" value="Genomic_DNA"/>
</dbReference>
<dbReference type="RefSeq" id="WP_011480280.1">
    <property type="nucleotide sequence ID" value="NC_007947.1"/>
</dbReference>
<dbReference type="SMR" id="Q1GZL1"/>
<dbReference type="STRING" id="265072.Mfla_2059"/>
<dbReference type="KEGG" id="mfa:Mfla_2059"/>
<dbReference type="eggNOG" id="COG0852">
    <property type="taxonomic scope" value="Bacteria"/>
</dbReference>
<dbReference type="HOGENOM" id="CLU_042628_2_1_4"/>
<dbReference type="OrthoDB" id="9803286at2"/>
<dbReference type="Proteomes" id="UP000002440">
    <property type="component" value="Chromosome"/>
</dbReference>
<dbReference type="GO" id="GO:0005886">
    <property type="term" value="C:plasma membrane"/>
    <property type="evidence" value="ECO:0007669"/>
    <property type="project" value="UniProtKB-SubCell"/>
</dbReference>
<dbReference type="GO" id="GO:0008137">
    <property type="term" value="F:NADH dehydrogenase (ubiquinone) activity"/>
    <property type="evidence" value="ECO:0007669"/>
    <property type="project" value="InterPro"/>
</dbReference>
<dbReference type="GO" id="GO:0050136">
    <property type="term" value="F:NADH:ubiquinone reductase (non-electrogenic) activity"/>
    <property type="evidence" value="ECO:0007669"/>
    <property type="project" value="UniProtKB-UniRule"/>
</dbReference>
<dbReference type="GO" id="GO:0048038">
    <property type="term" value="F:quinone binding"/>
    <property type="evidence" value="ECO:0007669"/>
    <property type="project" value="UniProtKB-KW"/>
</dbReference>
<dbReference type="Gene3D" id="3.30.460.80">
    <property type="entry name" value="NADH:ubiquinone oxidoreductase, 30kDa subunit"/>
    <property type="match status" value="1"/>
</dbReference>
<dbReference type="HAMAP" id="MF_01357">
    <property type="entry name" value="NDH1_NuoC"/>
    <property type="match status" value="1"/>
</dbReference>
<dbReference type="InterPro" id="IPR010218">
    <property type="entry name" value="NADH_DH_suC"/>
</dbReference>
<dbReference type="InterPro" id="IPR037232">
    <property type="entry name" value="NADH_quin_OxRdtase_su_C/D-like"/>
</dbReference>
<dbReference type="InterPro" id="IPR001268">
    <property type="entry name" value="NADH_UbQ_OxRdtase_30kDa_su"/>
</dbReference>
<dbReference type="InterPro" id="IPR020396">
    <property type="entry name" value="NADH_UbQ_OxRdtase_CS"/>
</dbReference>
<dbReference type="NCBIfam" id="TIGR01961">
    <property type="entry name" value="NuoC_fam"/>
    <property type="match status" value="1"/>
</dbReference>
<dbReference type="NCBIfam" id="NF004730">
    <property type="entry name" value="PRK06074.1-1"/>
    <property type="match status" value="1"/>
</dbReference>
<dbReference type="PANTHER" id="PTHR10884:SF14">
    <property type="entry name" value="NADH DEHYDROGENASE [UBIQUINONE] IRON-SULFUR PROTEIN 3, MITOCHONDRIAL"/>
    <property type="match status" value="1"/>
</dbReference>
<dbReference type="PANTHER" id="PTHR10884">
    <property type="entry name" value="NADH DEHYDROGENASE UBIQUINONE IRON-SULFUR PROTEIN 3"/>
    <property type="match status" value="1"/>
</dbReference>
<dbReference type="Pfam" id="PF00329">
    <property type="entry name" value="Complex1_30kDa"/>
    <property type="match status" value="1"/>
</dbReference>
<dbReference type="SUPFAM" id="SSF143243">
    <property type="entry name" value="Nqo5-like"/>
    <property type="match status" value="1"/>
</dbReference>
<dbReference type="PROSITE" id="PS00542">
    <property type="entry name" value="COMPLEX1_30K"/>
    <property type="match status" value="1"/>
</dbReference>